<keyword id="KW-0963">Cytoplasm</keyword>
<keyword id="KW-0238">DNA-binding</keyword>
<keyword id="KW-0804">Transcription</keyword>
<keyword id="KW-0805">Transcription regulation</keyword>
<protein>
    <recommendedName>
        <fullName evidence="1">Probable transcriptional regulatory protein Hac_0344</fullName>
    </recommendedName>
</protein>
<organism>
    <name type="scientific">Helicobacter acinonychis (strain Sheeba)</name>
    <dbReference type="NCBI Taxonomy" id="382638"/>
    <lineage>
        <taxon>Bacteria</taxon>
        <taxon>Pseudomonadati</taxon>
        <taxon>Campylobacterota</taxon>
        <taxon>Epsilonproteobacteria</taxon>
        <taxon>Campylobacterales</taxon>
        <taxon>Helicobacteraceae</taxon>
        <taxon>Helicobacter</taxon>
    </lineage>
</organism>
<comment type="subcellular location">
    <subcellularLocation>
        <location evidence="1">Cytoplasm</location>
    </subcellularLocation>
</comment>
<comment type="similarity">
    <text evidence="1">Belongs to the TACO1 family.</text>
</comment>
<proteinExistence type="inferred from homology"/>
<reference key="1">
    <citation type="journal article" date="2006" name="PLoS Genet.">
        <title>Who ate whom? Adaptive Helicobacter genomic changes that accompanied a host jump from early humans to large felines.</title>
        <authorList>
            <person name="Eppinger M."/>
            <person name="Baar C."/>
            <person name="Linz B."/>
            <person name="Raddatz G."/>
            <person name="Lanz C."/>
            <person name="Keller H."/>
            <person name="Morelli G."/>
            <person name="Gressmann H."/>
            <person name="Achtman M."/>
            <person name="Schuster S.C."/>
        </authorList>
    </citation>
    <scope>NUCLEOTIDE SEQUENCE [LARGE SCALE GENOMIC DNA]</scope>
    <source>
        <strain>Sheeba</strain>
    </source>
</reference>
<feature type="chain" id="PRO_1000045319" description="Probable transcriptional regulatory protein Hac_0344">
    <location>
        <begin position="1"/>
        <end position="240"/>
    </location>
</feature>
<name>Y344_HELAH</name>
<dbReference type="EMBL" id="AM260522">
    <property type="protein sequence ID" value="CAJ99183.1"/>
    <property type="molecule type" value="Genomic_DNA"/>
</dbReference>
<dbReference type="RefSeq" id="WP_011577298.1">
    <property type="nucleotide sequence ID" value="NC_008229.1"/>
</dbReference>
<dbReference type="SMR" id="Q17YU3"/>
<dbReference type="STRING" id="382638.Hac_0344"/>
<dbReference type="GeneID" id="31757855"/>
<dbReference type="KEGG" id="hac:Hac_0344"/>
<dbReference type="eggNOG" id="COG0217">
    <property type="taxonomic scope" value="Bacteria"/>
</dbReference>
<dbReference type="HOGENOM" id="CLU_062974_2_2_7"/>
<dbReference type="OrthoDB" id="9781053at2"/>
<dbReference type="BioCyc" id="HACI382638:HAC_RS01545-MONOMER"/>
<dbReference type="Proteomes" id="UP000000775">
    <property type="component" value="Chromosome"/>
</dbReference>
<dbReference type="GO" id="GO:0005829">
    <property type="term" value="C:cytosol"/>
    <property type="evidence" value="ECO:0007669"/>
    <property type="project" value="TreeGrafter"/>
</dbReference>
<dbReference type="GO" id="GO:0003677">
    <property type="term" value="F:DNA binding"/>
    <property type="evidence" value="ECO:0007669"/>
    <property type="project" value="UniProtKB-UniRule"/>
</dbReference>
<dbReference type="GO" id="GO:0006355">
    <property type="term" value="P:regulation of DNA-templated transcription"/>
    <property type="evidence" value="ECO:0007669"/>
    <property type="project" value="UniProtKB-UniRule"/>
</dbReference>
<dbReference type="FunFam" id="1.10.10.200:FF:000008">
    <property type="entry name" value="Probable transcriptional regulatory protein HP_0162"/>
    <property type="match status" value="1"/>
</dbReference>
<dbReference type="FunFam" id="3.30.70.980:FF:000016">
    <property type="entry name" value="Probable transcriptional regulatory protein HP_0162"/>
    <property type="match status" value="1"/>
</dbReference>
<dbReference type="Gene3D" id="1.10.10.200">
    <property type="match status" value="1"/>
</dbReference>
<dbReference type="Gene3D" id="3.30.70.980">
    <property type="match status" value="2"/>
</dbReference>
<dbReference type="HAMAP" id="MF_00693">
    <property type="entry name" value="Transcrip_reg_TACO1"/>
    <property type="match status" value="1"/>
</dbReference>
<dbReference type="InterPro" id="IPR017856">
    <property type="entry name" value="Integrase-like_N"/>
</dbReference>
<dbReference type="InterPro" id="IPR048300">
    <property type="entry name" value="TACO1_YebC-like_2nd/3rd_dom"/>
</dbReference>
<dbReference type="InterPro" id="IPR049083">
    <property type="entry name" value="TACO1_YebC_N"/>
</dbReference>
<dbReference type="InterPro" id="IPR002876">
    <property type="entry name" value="Transcrip_reg_TACO1-like"/>
</dbReference>
<dbReference type="InterPro" id="IPR026564">
    <property type="entry name" value="Transcrip_reg_TACO1-like_dom3"/>
</dbReference>
<dbReference type="InterPro" id="IPR029072">
    <property type="entry name" value="YebC-like"/>
</dbReference>
<dbReference type="NCBIfam" id="NF009044">
    <property type="entry name" value="PRK12378.1"/>
    <property type="match status" value="1"/>
</dbReference>
<dbReference type="NCBIfam" id="TIGR01033">
    <property type="entry name" value="YebC/PmpR family DNA-binding transcriptional regulator"/>
    <property type="match status" value="1"/>
</dbReference>
<dbReference type="PANTHER" id="PTHR12532:SF6">
    <property type="entry name" value="TRANSCRIPTIONAL REGULATORY PROTEIN YEBC-RELATED"/>
    <property type="match status" value="1"/>
</dbReference>
<dbReference type="PANTHER" id="PTHR12532">
    <property type="entry name" value="TRANSLATIONAL ACTIVATOR OF CYTOCHROME C OXIDASE 1"/>
    <property type="match status" value="1"/>
</dbReference>
<dbReference type="Pfam" id="PF20772">
    <property type="entry name" value="TACO1_YebC_N"/>
    <property type="match status" value="1"/>
</dbReference>
<dbReference type="Pfam" id="PF01709">
    <property type="entry name" value="Transcrip_reg"/>
    <property type="match status" value="1"/>
</dbReference>
<dbReference type="SUPFAM" id="SSF75625">
    <property type="entry name" value="YebC-like"/>
    <property type="match status" value="1"/>
</dbReference>
<accession>Q17YU3</accession>
<evidence type="ECO:0000255" key="1">
    <source>
        <dbReference type="HAMAP-Rule" id="MF_00693"/>
    </source>
</evidence>
<sequence>MGRAFEYRRAAKEKRWDKMSKVFPKLAKAITLAAKDGGGDPDTNAKLRTAILNAKAQNMPKDNIDAAIKRASSKEGNLSETTYEGKANFGVLIIMECMTDNPTRTVANLKSYFNKTQGASIVPNGSLEFMFNRKSVFECLKNEVENLKLSLEDLEFALIDYGLEELEEVGDKIIIRGDYNSFKLLNEGFESLKLPILKASLQRIATTPIELNDEQMELTEKLLDKIEDDDDVVALYTNIE</sequence>
<gene>
    <name type="ordered locus">Hac_0344</name>
</gene>